<sequence length="298" mass="33909">MLYFIGLGLSYETDITVRGLNAIKQCSRVYLEHYTSILMTASLEELEEFYGKKVTLADRELVESGAEELLRDADKEDVAFLVVGDVFGATTHTDLVLRAKQRNIPVEVIHNASVMNAVGSCGLQLYNFGQTISMVFFTDSWRPDSWYDKIWENRKIGLHTLVLLDIKVKEQSIENMARGRLIYEPPRYMSIAQCCEQLLEIEETRGTEAYTPDTPCVAISRLGSASQTFKAGTIKELAEYDSGEPLHSLVILGRQTHELEIEYLLEFCDDREKFKQDVASDQEYFKPPAWVPPPEDED</sequence>
<gene>
    <name type="primary">DPH5</name>
    <name type="ordered locus">KLLA0F22836g</name>
</gene>
<proteinExistence type="inferred from homology"/>
<keyword id="KW-0963">Cytoplasm</keyword>
<keyword id="KW-0489">Methyltransferase</keyword>
<keyword id="KW-1185">Reference proteome</keyword>
<keyword id="KW-0949">S-adenosyl-L-methionine</keyword>
<keyword id="KW-0808">Transferase</keyword>
<organism>
    <name type="scientific">Kluyveromyces lactis (strain ATCC 8585 / CBS 2359 / DSM 70799 / NBRC 1267 / NRRL Y-1140 / WM37)</name>
    <name type="common">Yeast</name>
    <name type="synonym">Candida sphaerica</name>
    <dbReference type="NCBI Taxonomy" id="284590"/>
    <lineage>
        <taxon>Eukaryota</taxon>
        <taxon>Fungi</taxon>
        <taxon>Dikarya</taxon>
        <taxon>Ascomycota</taxon>
        <taxon>Saccharomycotina</taxon>
        <taxon>Saccharomycetes</taxon>
        <taxon>Saccharomycetales</taxon>
        <taxon>Saccharomycetaceae</taxon>
        <taxon>Kluyveromyces</taxon>
    </lineage>
</organism>
<evidence type="ECO:0000250" key="1"/>
<evidence type="ECO:0000250" key="2">
    <source>
        <dbReference type="UniProtKB" id="P32469"/>
    </source>
</evidence>
<evidence type="ECO:0000305" key="3"/>
<name>DPH5_KLULA</name>
<comment type="function">
    <text evidence="2">S-adenosyl-L-methionine-dependent methyltransferase that catalyzes four methylations of the modified target histidine residue in translation elongation factor 2 (EF-2), to form an intermediate called diphthine methyl ester. The four successive methylation reactions represent the second step of diphthamide biosynthesis.</text>
</comment>
<comment type="catalytic activity">
    <reaction evidence="2">
        <text>2-[(3S)-amino-3-carboxypropyl]-L-histidyl-[translation elongation factor 2] + 4 S-adenosyl-L-methionine = diphthine methyl ester-[translation elongation factor 2] + 4 S-adenosyl-L-homocysteine + 3 H(+)</text>
        <dbReference type="Rhea" id="RHEA:42652"/>
        <dbReference type="Rhea" id="RHEA-COMP:9749"/>
        <dbReference type="Rhea" id="RHEA-COMP:10173"/>
        <dbReference type="ChEBI" id="CHEBI:15378"/>
        <dbReference type="ChEBI" id="CHEBI:57856"/>
        <dbReference type="ChEBI" id="CHEBI:59789"/>
        <dbReference type="ChEBI" id="CHEBI:73995"/>
        <dbReference type="ChEBI" id="CHEBI:79005"/>
        <dbReference type="EC" id="2.1.1.314"/>
    </reaction>
</comment>
<comment type="pathway">
    <text>Protein modification; peptidyl-diphthamide biosynthesis.</text>
</comment>
<comment type="subcellular location">
    <subcellularLocation>
        <location evidence="1">Cytoplasm</location>
    </subcellularLocation>
</comment>
<comment type="similarity">
    <text evidence="3">Belongs to the diphthine synthase family.</text>
</comment>
<accession>Q6CIZ1</accession>
<protein>
    <recommendedName>
        <fullName>Diphthine methyl ester synthase</fullName>
        <ecNumber>2.1.1.314</ecNumber>
    </recommendedName>
    <alternativeName>
        <fullName>Diphthamide biosynthesis methyltransferase</fullName>
    </alternativeName>
</protein>
<feature type="chain" id="PRO_0000156143" description="Diphthine methyl ester synthase">
    <location>
        <begin position="1"/>
        <end position="298"/>
    </location>
</feature>
<feature type="binding site" evidence="1">
    <location>
        <position position="9"/>
    </location>
    <ligand>
        <name>S-adenosyl-L-methionine</name>
        <dbReference type="ChEBI" id="CHEBI:59789"/>
    </ligand>
</feature>
<feature type="binding site" evidence="1">
    <location>
        <position position="85"/>
    </location>
    <ligand>
        <name>S-adenosyl-L-methionine</name>
        <dbReference type="ChEBI" id="CHEBI:59789"/>
    </ligand>
</feature>
<feature type="binding site" evidence="1">
    <location>
        <position position="88"/>
    </location>
    <ligand>
        <name>S-adenosyl-L-methionine</name>
        <dbReference type="ChEBI" id="CHEBI:59789"/>
    </ligand>
</feature>
<feature type="binding site" evidence="1">
    <location>
        <begin position="113"/>
        <end position="114"/>
    </location>
    <ligand>
        <name>S-adenosyl-L-methionine</name>
        <dbReference type="ChEBI" id="CHEBI:59789"/>
    </ligand>
</feature>
<feature type="binding site" evidence="1">
    <location>
        <position position="164"/>
    </location>
    <ligand>
        <name>S-adenosyl-L-methionine</name>
        <dbReference type="ChEBI" id="CHEBI:59789"/>
    </ligand>
</feature>
<feature type="binding site" evidence="1">
    <location>
        <position position="222"/>
    </location>
    <ligand>
        <name>S-adenosyl-L-methionine</name>
        <dbReference type="ChEBI" id="CHEBI:59789"/>
    </ligand>
</feature>
<feature type="binding site" evidence="1">
    <location>
        <position position="247"/>
    </location>
    <ligand>
        <name>S-adenosyl-L-methionine</name>
        <dbReference type="ChEBI" id="CHEBI:59789"/>
    </ligand>
</feature>
<dbReference type="EC" id="2.1.1.314"/>
<dbReference type="EMBL" id="CR382126">
    <property type="protein sequence ID" value="CAG98806.1"/>
    <property type="molecule type" value="Genomic_DNA"/>
</dbReference>
<dbReference type="RefSeq" id="XP_456098.1">
    <property type="nucleotide sequence ID" value="XM_456098.1"/>
</dbReference>
<dbReference type="SMR" id="Q6CIZ1"/>
<dbReference type="FunCoup" id="Q6CIZ1">
    <property type="interactions" value="986"/>
</dbReference>
<dbReference type="STRING" id="284590.Q6CIZ1"/>
<dbReference type="PaxDb" id="284590-Q6CIZ1"/>
<dbReference type="KEGG" id="kla:KLLA0_F22836g"/>
<dbReference type="eggNOG" id="KOG3123">
    <property type="taxonomic scope" value="Eukaryota"/>
</dbReference>
<dbReference type="HOGENOM" id="CLU_066040_1_0_1"/>
<dbReference type="InParanoid" id="Q6CIZ1"/>
<dbReference type="OMA" id="HNASIMS"/>
<dbReference type="UniPathway" id="UPA00559"/>
<dbReference type="Proteomes" id="UP000000598">
    <property type="component" value="Chromosome F"/>
</dbReference>
<dbReference type="GO" id="GO:0005737">
    <property type="term" value="C:cytoplasm"/>
    <property type="evidence" value="ECO:0007669"/>
    <property type="project" value="UniProtKB-SubCell"/>
</dbReference>
<dbReference type="GO" id="GO:0141133">
    <property type="term" value="F:diphthine methyl ester synthase activity"/>
    <property type="evidence" value="ECO:0007669"/>
    <property type="project" value="UniProtKB-EC"/>
</dbReference>
<dbReference type="GO" id="GO:0032259">
    <property type="term" value="P:methylation"/>
    <property type="evidence" value="ECO:0007669"/>
    <property type="project" value="UniProtKB-KW"/>
</dbReference>
<dbReference type="GO" id="GO:0017183">
    <property type="term" value="P:protein histidyl modification to diphthamide"/>
    <property type="evidence" value="ECO:0000250"/>
    <property type="project" value="UniProtKB"/>
</dbReference>
<dbReference type="CDD" id="cd11647">
    <property type="entry name" value="DHP5_DphB"/>
    <property type="match status" value="1"/>
</dbReference>
<dbReference type="FunFam" id="3.30.950.10:FF:000004">
    <property type="entry name" value="Diphthine synthase putative"/>
    <property type="match status" value="1"/>
</dbReference>
<dbReference type="FunFam" id="3.40.1010.10:FF:000004">
    <property type="entry name" value="Putative diphthine synthase"/>
    <property type="match status" value="1"/>
</dbReference>
<dbReference type="Gene3D" id="3.40.1010.10">
    <property type="entry name" value="Cobalt-precorrin-4 Transmethylase, Domain 1"/>
    <property type="match status" value="1"/>
</dbReference>
<dbReference type="Gene3D" id="3.30.950.10">
    <property type="entry name" value="Methyltransferase, Cobalt-precorrin-4 Transmethylase, Domain 2"/>
    <property type="match status" value="1"/>
</dbReference>
<dbReference type="HAMAP" id="MF_01084">
    <property type="entry name" value="Diphthine_synth"/>
    <property type="match status" value="1"/>
</dbReference>
<dbReference type="InterPro" id="IPR000878">
    <property type="entry name" value="4pyrrol_Mease"/>
</dbReference>
<dbReference type="InterPro" id="IPR035996">
    <property type="entry name" value="4pyrrol_Methylase_sf"/>
</dbReference>
<dbReference type="InterPro" id="IPR014777">
    <property type="entry name" value="4pyrrole_Mease_sub1"/>
</dbReference>
<dbReference type="InterPro" id="IPR014776">
    <property type="entry name" value="4pyrrole_Mease_sub2"/>
</dbReference>
<dbReference type="InterPro" id="IPR004551">
    <property type="entry name" value="Dphthn_synthase"/>
</dbReference>
<dbReference type="NCBIfam" id="TIGR00522">
    <property type="entry name" value="dph5"/>
    <property type="match status" value="1"/>
</dbReference>
<dbReference type="PANTHER" id="PTHR10882:SF0">
    <property type="entry name" value="DIPHTHINE METHYL ESTER SYNTHASE"/>
    <property type="match status" value="1"/>
</dbReference>
<dbReference type="PANTHER" id="PTHR10882">
    <property type="entry name" value="DIPHTHINE SYNTHASE"/>
    <property type="match status" value="1"/>
</dbReference>
<dbReference type="Pfam" id="PF00590">
    <property type="entry name" value="TP_methylase"/>
    <property type="match status" value="1"/>
</dbReference>
<dbReference type="PIRSF" id="PIRSF036432">
    <property type="entry name" value="Diphthine_synth"/>
    <property type="match status" value="1"/>
</dbReference>
<dbReference type="SUPFAM" id="SSF53790">
    <property type="entry name" value="Tetrapyrrole methylase"/>
    <property type="match status" value="1"/>
</dbReference>
<reference key="1">
    <citation type="journal article" date="2004" name="Nature">
        <title>Genome evolution in yeasts.</title>
        <authorList>
            <person name="Dujon B."/>
            <person name="Sherman D."/>
            <person name="Fischer G."/>
            <person name="Durrens P."/>
            <person name="Casaregola S."/>
            <person name="Lafontaine I."/>
            <person name="de Montigny J."/>
            <person name="Marck C."/>
            <person name="Neuveglise C."/>
            <person name="Talla E."/>
            <person name="Goffard N."/>
            <person name="Frangeul L."/>
            <person name="Aigle M."/>
            <person name="Anthouard V."/>
            <person name="Babour A."/>
            <person name="Barbe V."/>
            <person name="Barnay S."/>
            <person name="Blanchin S."/>
            <person name="Beckerich J.-M."/>
            <person name="Beyne E."/>
            <person name="Bleykasten C."/>
            <person name="Boisrame A."/>
            <person name="Boyer J."/>
            <person name="Cattolico L."/>
            <person name="Confanioleri F."/>
            <person name="de Daruvar A."/>
            <person name="Despons L."/>
            <person name="Fabre E."/>
            <person name="Fairhead C."/>
            <person name="Ferry-Dumazet H."/>
            <person name="Groppi A."/>
            <person name="Hantraye F."/>
            <person name="Hennequin C."/>
            <person name="Jauniaux N."/>
            <person name="Joyet P."/>
            <person name="Kachouri R."/>
            <person name="Kerrest A."/>
            <person name="Koszul R."/>
            <person name="Lemaire M."/>
            <person name="Lesur I."/>
            <person name="Ma L."/>
            <person name="Muller H."/>
            <person name="Nicaud J.-M."/>
            <person name="Nikolski M."/>
            <person name="Oztas S."/>
            <person name="Ozier-Kalogeropoulos O."/>
            <person name="Pellenz S."/>
            <person name="Potier S."/>
            <person name="Richard G.-F."/>
            <person name="Straub M.-L."/>
            <person name="Suleau A."/>
            <person name="Swennen D."/>
            <person name="Tekaia F."/>
            <person name="Wesolowski-Louvel M."/>
            <person name="Westhof E."/>
            <person name="Wirth B."/>
            <person name="Zeniou-Meyer M."/>
            <person name="Zivanovic Y."/>
            <person name="Bolotin-Fukuhara M."/>
            <person name="Thierry A."/>
            <person name="Bouchier C."/>
            <person name="Caudron B."/>
            <person name="Scarpelli C."/>
            <person name="Gaillardin C."/>
            <person name="Weissenbach J."/>
            <person name="Wincker P."/>
            <person name="Souciet J.-L."/>
        </authorList>
    </citation>
    <scope>NUCLEOTIDE SEQUENCE [LARGE SCALE GENOMIC DNA]</scope>
    <source>
        <strain>ATCC 8585 / CBS 2359 / DSM 70799 / NBRC 1267 / NRRL Y-1140 / WM37</strain>
    </source>
</reference>